<feature type="chain" id="PRO_1000203310" description="tRNA-specific 2-thiouridylase MnmA">
    <location>
        <begin position="1"/>
        <end position="374"/>
    </location>
</feature>
<feature type="region of interest" description="Interaction with target base in tRNA" evidence="1">
    <location>
        <begin position="103"/>
        <end position="105"/>
    </location>
</feature>
<feature type="region of interest" description="Interaction with tRNA" evidence="1">
    <location>
        <begin position="154"/>
        <end position="156"/>
    </location>
</feature>
<feature type="region of interest" description="Interaction with tRNA" evidence="1">
    <location>
        <begin position="316"/>
        <end position="317"/>
    </location>
</feature>
<feature type="active site" description="Nucleophile" evidence="1">
    <location>
        <position position="108"/>
    </location>
</feature>
<feature type="active site" description="Cysteine persulfide intermediate" evidence="1">
    <location>
        <position position="204"/>
    </location>
</feature>
<feature type="binding site" evidence="1">
    <location>
        <begin position="17"/>
        <end position="24"/>
    </location>
    <ligand>
        <name>ATP</name>
        <dbReference type="ChEBI" id="CHEBI:30616"/>
    </ligand>
</feature>
<feature type="binding site" evidence="1">
    <location>
        <position position="43"/>
    </location>
    <ligand>
        <name>ATP</name>
        <dbReference type="ChEBI" id="CHEBI:30616"/>
    </ligand>
</feature>
<feature type="binding site" evidence="1">
    <location>
        <position position="132"/>
    </location>
    <ligand>
        <name>ATP</name>
        <dbReference type="ChEBI" id="CHEBI:30616"/>
    </ligand>
</feature>
<feature type="site" description="Interaction with tRNA" evidence="1">
    <location>
        <position position="133"/>
    </location>
</feature>
<feature type="site" description="Interaction with tRNA" evidence="1">
    <location>
        <position position="348"/>
    </location>
</feature>
<feature type="disulfide bond" description="Alternate" evidence="1">
    <location>
        <begin position="108"/>
        <end position="204"/>
    </location>
</feature>
<protein>
    <recommendedName>
        <fullName evidence="1">tRNA-specific 2-thiouridylase MnmA</fullName>
        <ecNumber evidence="1">2.8.1.13</ecNumber>
    </recommendedName>
</protein>
<organism>
    <name type="scientific">Pseudomonas fluorescens (strain SBW25)</name>
    <dbReference type="NCBI Taxonomy" id="216595"/>
    <lineage>
        <taxon>Bacteria</taxon>
        <taxon>Pseudomonadati</taxon>
        <taxon>Pseudomonadota</taxon>
        <taxon>Gammaproteobacteria</taxon>
        <taxon>Pseudomonadales</taxon>
        <taxon>Pseudomonadaceae</taxon>
        <taxon>Pseudomonas</taxon>
    </lineage>
</organism>
<keyword id="KW-0067">ATP-binding</keyword>
<keyword id="KW-0963">Cytoplasm</keyword>
<keyword id="KW-1015">Disulfide bond</keyword>
<keyword id="KW-0547">Nucleotide-binding</keyword>
<keyword id="KW-0694">RNA-binding</keyword>
<keyword id="KW-0808">Transferase</keyword>
<keyword id="KW-0819">tRNA processing</keyword>
<keyword id="KW-0820">tRNA-binding</keyword>
<proteinExistence type="inferred from homology"/>
<name>MNMA_PSEFS</name>
<dbReference type="EC" id="2.8.1.13" evidence="1"/>
<dbReference type="EMBL" id="AM181176">
    <property type="protein sequence ID" value="CAY50124.1"/>
    <property type="molecule type" value="Genomic_DNA"/>
</dbReference>
<dbReference type="RefSeq" id="WP_012724945.1">
    <property type="nucleotide sequence ID" value="NC_012660.1"/>
</dbReference>
<dbReference type="SMR" id="C3JY68"/>
<dbReference type="STRING" id="294.SRM1_03438"/>
<dbReference type="GeneID" id="93465160"/>
<dbReference type="eggNOG" id="COG0482">
    <property type="taxonomic scope" value="Bacteria"/>
</dbReference>
<dbReference type="HOGENOM" id="CLU_035188_1_0_6"/>
<dbReference type="OrthoDB" id="9800696at2"/>
<dbReference type="GO" id="GO:0005737">
    <property type="term" value="C:cytoplasm"/>
    <property type="evidence" value="ECO:0007669"/>
    <property type="project" value="UniProtKB-SubCell"/>
</dbReference>
<dbReference type="GO" id="GO:0005524">
    <property type="term" value="F:ATP binding"/>
    <property type="evidence" value="ECO:0007669"/>
    <property type="project" value="UniProtKB-KW"/>
</dbReference>
<dbReference type="GO" id="GO:0000049">
    <property type="term" value="F:tRNA binding"/>
    <property type="evidence" value="ECO:0007669"/>
    <property type="project" value="UniProtKB-KW"/>
</dbReference>
<dbReference type="GO" id="GO:0103016">
    <property type="term" value="F:tRNA-uridine 2-sulfurtransferase activity"/>
    <property type="evidence" value="ECO:0007669"/>
    <property type="project" value="UniProtKB-EC"/>
</dbReference>
<dbReference type="GO" id="GO:0002143">
    <property type="term" value="P:tRNA wobble position uridine thiolation"/>
    <property type="evidence" value="ECO:0007669"/>
    <property type="project" value="TreeGrafter"/>
</dbReference>
<dbReference type="CDD" id="cd01998">
    <property type="entry name" value="MnmA_TRMU-like"/>
    <property type="match status" value="1"/>
</dbReference>
<dbReference type="FunFam" id="2.30.30.280:FF:000001">
    <property type="entry name" value="tRNA-specific 2-thiouridylase MnmA"/>
    <property type="match status" value="1"/>
</dbReference>
<dbReference type="FunFam" id="2.40.30.10:FF:000023">
    <property type="entry name" value="tRNA-specific 2-thiouridylase MnmA"/>
    <property type="match status" value="1"/>
</dbReference>
<dbReference type="FunFam" id="3.40.50.620:FF:000004">
    <property type="entry name" value="tRNA-specific 2-thiouridylase MnmA"/>
    <property type="match status" value="1"/>
</dbReference>
<dbReference type="Gene3D" id="2.30.30.280">
    <property type="entry name" value="Adenine nucleotide alpha hydrolases-like domains"/>
    <property type="match status" value="1"/>
</dbReference>
<dbReference type="Gene3D" id="3.40.50.620">
    <property type="entry name" value="HUPs"/>
    <property type="match status" value="1"/>
</dbReference>
<dbReference type="Gene3D" id="2.40.30.10">
    <property type="entry name" value="Translation factors"/>
    <property type="match status" value="1"/>
</dbReference>
<dbReference type="HAMAP" id="MF_00144">
    <property type="entry name" value="tRNA_thiouridyl_MnmA"/>
    <property type="match status" value="1"/>
</dbReference>
<dbReference type="InterPro" id="IPR004506">
    <property type="entry name" value="MnmA-like"/>
</dbReference>
<dbReference type="InterPro" id="IPR046885">
    <property type="entry name" value="MnmA-like_C"/>
</dbReference>
<dbReference type="InterPro" id="IPR046884">
    <property type="entry name" value="MnmA-like_central"/>
</dbReference>
<dbReference type="InterPro" id="IPR023382">
    <property type="entry name" value="MnmA-like_central_sf"/>
</dbReference>
<dbReference type="InterPro" id="IPR014729">
    <property type="entry name" value="Rossmann-like_a/b/a_fold"/>
</dbReference>
<dbReference type="NCBIfam" id="NF001138">
    <property type="entry name" value="PRK00143.1"/>
    <property type="match status" value="1"/>
</dbReference>
<dbReference type="NCBIfam" id="TIGR00420">
    <property type="entry name" value="trmU"/>
    <property type="match status" value="1"/>
</dbReference>
<dbReference type="PANTHER" id="PTHR11933:SF5">
    <property type="entry name" value="MITOCHONDRIAL TRNA-SPECIFIC 2-THIOURIDYLASE 1"/>
    <property type="match status" value="1"/>
</dbReference>
<dbReference type="PANTHER" id="PTHR11933">
    <property type="entry name" value="TRNA 5-METHYLAMINOMETHYL-2-THIOURIDYLATE -METHYLTRANSFERASE"/>
    <property type="match status" value="1"/>
</dbReference>
<dbReference type="Pfam" id="PF03054">
    <property type="entry name" value="tRNA_Me_trans"/>
    <property type="match status" value="1"/>
</dbReference>
<dbReference type="Pfam" id="PF20258">
    <property type="entry name" value="tRNA_Me_trans_C"/>
    <property type="match status" value="1"/>
</dbReference>
<dbReference type="Pfam" id="PF20259">
    <property type="entry name" value="tRNA_Me_trans_M"/>
    <property type="match status" value="1"/>
</dbReference>
<dbReference type="SUPFAM" id="SSF52402">
    <property type="entry name" value="Adenine nucleotide alpha hydrolases-like"/>
    <property type="match status" value="1"/>
</dbReference>
<sequence>MRDPAPSDTQKKRVIVGMSGGVDSSVSAVLLMEQGYEVEGLFMKNWEEDDGTEYCTAMDDLADAQAVCDKIGIKLHTANFAAEYWDNVFEHFLAEYKAGRTPNPDILCNREIKFKAFLDYAMMLGADLIATGHYVRRRDIDGRTELLKGLDPNKDQSYFLHAVGGEQIAKTLFPVGELEKPEVRKIAEKHGLATAKKKDSTGICFIGERRFSDFLKQYLPAQPGEIKTTDGEVIGRHHGLMYHTIGQRQGLGIGGLKDAGEEPWYVLVKDLDNNVLIVGQGNEHPLLFSGALLASEIYWVNPIDLSTPRRLTAKVRYRQGDQPCTLEKTATGYRATFDDPQRAVTPGQSVVFYDGEICLGGGVIEVAEAWSNPA</sequence>
<comment type="function">
    <text evidence="1">Catalyzes the 2-thiolation of uridine at the wobble position (U34) of tRNA, leading to the formation of s(2)U34.</text>
</comment>
<comment type="catalytic activity">
    <reaction evidence="1">
        <text>S-sulfanyl-L-cysteinyl-[protein] + uridine(34) in tRNA + AH2 + ATP = 2-thiouridine(34) in tRNA + L-cysteinyl-[protein] + A + AMP + diphosphate + H(+)</text>
        <dbReference type="Rhea" id="RHEA:47032"/>
        <dbReference type="Rhea" id="RHEA-COMP:10131"/>
        <dbReference type="Rhea" id="RHEA-COMP:11726"/>
        <dbReference type="Rhea" id="RHEA-COMP:11727"/>
        <dbReference type="Rhea" id="RHEA-COMP:11728"/>
        <dbReference type="ChEBI" id="CHEBI:13193"/>
        <dbReference type="ChEBI" id="CHEBI:15378"/>
        <dbReference type="ChEBI" id="CHEBI:17499"/>
        <dbReference type="ChEBI" id="CHEBI:29950"/>
        <dbReference type="ChEBI" id="CHEBI:30616"/>
        <dbReference type="ChEBI" id="CHEBI:33019"/>
        <dbReference type="ChEBI" id="CHEBI:61963"/>
        <dbReference type="ChEBI" id="CHEBI:65315"/>
        <dbReference type="ChEBI" id="CHEBI:87170"/>
        <dbReference type="ChEBI" id="CHEBI:456215"/>
        <dbReference type="EC" id="2.8.1.13"/>
    </reaction>
</comment>
<comment type="subcellular location">
    <subcellularLocation>
        <location evidence="1">Cytoplasm</location>
    </subcellularLocation>
</comment>
<comment type="similarity">
    <text evidence="1">Belongs to the MnmA/TRMU family.</text>
</comment>
<accession>C3JY68</accession>
<gene>
    <name evidence="1" type="primary">mnmA</name>
    <name type="ordered locus">PFLU_3811</name>
</gene>
<reference key="1">
    <citation type="journal article" date="2009" name="Genome Biol.">
        <title>Genomic and genetic analyses of diversity and plant interactions of Pseudomonas fluorescens.</title>
        <authorList>
            <person name="Silby M.W."/>
            <person name="Cerdeno-Tarraga A.M."/>
            <person name="Vernikos G.S."/>
            <person name="Giddens S.R."/>
            <person name="Jackson R.W."/>
            <person name="Preston G.M."/>
            <person name="Zhang X.-X."/>
            <person name="Moon C.D."/>
            <person name="Gehrig S.M."/>
            <person name="Godfrey S.A.C."/>
            <person name="Knight C.G."/>
            <person name="Malone J.G."/>
            <person name="Robinson Z."/>
            <person name="Spiers A.J."/>
            <person name="Harris S."/>
            <person name="Challis G.L."/>
            <person name="Yaxley A.M."/>
            <person name="Harris D."/>
            <person name="Seeger K."/>
            <person name="Murphy L."/>
            <person name="Rutter S."/>
            <person name="Squares R."/>
            <person name="Quail M.A."/>
            <person name="Saunders E."/>
            <person name="Mavromatis K."/>
            <person name="Brettin T.S."/>
            <person name="Bentley S.D."/>
            <person name="Hothersall J."/>
            <person name="Stephens E."/>
            <person name="Thomas C.M."/>
            <person name="Parkhill J."/>
            <person name="Levy S.B."/>
            <person name="Rainey P.B."/>
            <person name="Thomson N.R."/>
        </authorList>
    </citation>
    <scope>NUCLEOTIDE SEQUENCE [LARGE SCALE GENOMIC DNA]</scope>
    <source>
        <strain>SBW25</strain>
    </source>
</reference>
<evidence type="ECO:0000255" key="1">
    <source>
        <dbReference type="HAMAP-Rule" id="MF_00144"/>
    </source>
</evidence>